<comment type="function">
    <text evidence="3">Component of the caffeine dehydrogenase complex that catalyzes the hydrolytical oxidation of 1,3,7-trimethylxanthine (caffeine) by incorporation of an oxygen atom originating from a water molecule into position C-8 to produce 1,3,7-trimethyluric acid (TMU). Coenzyme Q0 (ubiquinone-0) is the preferred electron acceptor and, to a lesser extent, coenzyme Q2 (ubiquinone-2) can also be used, but oxygen and NAD(P)(+) cannot. Is involved in a caffeine degradation pathway that allows Pseudomonas sp. strain CBB1 to grow on caffeine as the sole carbon and nitrogen source. Is also active with theobromine as substrate, but shows a very poor activity with theophylline and is not active with xanthine, 3-methylxanthine, 7-methylxanthine, TMU, and 3,7-dimethylurate.</text>
</comment>
<comment type="catalytic activity">
    <reaction evidence="3">
        <text>caffeine + a ubiquinone + H2O = 1,3,7-trimethylurate + a ubiquinol</text>
        <dbReference type="Rhea" id="RHEA:47148"/>
        <dbReference type="Rhea" id="RHEA-COMP:9565"/>
        <dbReference type="Rhea" id="RHEA-COMP:9566"/>
        <dbReference type="ChEBI" id="CHEBI:15377"/>
        <dbReference type="ChEBI" id="CHEBI:16389"/>
        <dbReference type="ChEBI" id="CHEBI:17976"/>
        <dbReference type="ChEBI" id="CHEBI:27732"/>
        <dbReference type="ChEBI" id="CHEBI:691622"/>
        <dbReference type="EC" id="1.17.5.2"/>
    </reaction>
    <physiologicalReaction direction="left-to-right" evidence="5">
        <dbReference type="Rhea" id="RHEA:47149"/>
    </physiologicalReaction>
</comment>
<comment type="catalytic activity">
    <reaction evidence="3">
        <text>ubiquinone-0 + caffeine + H2O = ubiquinol-0 + 1,3,7-trimethylurate</text>
        <dbReference type="Rhea" id="RHEA:27902"/>
        <dbReference type="ChEBI" id="CHEBI:15377"/>
        <dbReference type="ChEBI" id="CHEBI:27732"/>
        <dbReference type="ChEBI" id="CHEBI:27906"/>
        <dbReference type="ChEBI" id="CHEBI:60899"/>
        <dbReference type="ChEBI" id="CHEBI:691622"/>
        <dbReference type="EC" id="1.17.5.2"/>
    </reaction>
    <physiologicalReaction direction="left-to-right" evidence="5">
        <dbReference type="Rhea" id="RHEA:27903"/>
    </physiologicalReaction>
</comment>
<comment type="catalytic activity">
    <reaction evidence="3">
        <text>theobromine + a ubiquinone + H2O = 3,7-dimethylurate + a ubiquinol</text>
        <dbReference type="Rhea" id="RHEA:77299"/>
        <dbReference type="Rhea" id="RHEA-COMP:9565"/>
        <dbReference type="Rhea" id="RHEA-COMP:9566"/>
        <dbReference type="ChEBI" id="CHEBI:15377"/>
        <dbReference type="ChEBI" id="CHEBI:16389"/>
        <dbReference type="ChEBI" id="CHEBI:17976"/>
        <dbReference type="ChEBI" id="CHEBI:28946"/>
        <dbReference type="ChEBI" id="CHEBI:68531"/>
        <dbReference type="EC" id="1.17.5.2"/>
    </reaction>
    <physiologicalReaction direction="left-to-right" evidence="5">
        <dbReference type="Rhea" id="RHEA:77300"/>
    </physiologicalReaction>
</comment>
<comment type="biophysicochemical properties">
    <kinetics>
        <KM evidence="3">3.7 uM for caffeine (at 35 degrees Celsius and pH 7)</KM>
        <text>kcat is 10 min(-1) with caffeine as substrate.</text>
    </kinetics>
    <phDependence>
        <text evidence="3">Optimum pH is 7.0.</text>
    </phDependence>
    <temperatureDependence>
        <text evidence="3">The caffeine dehydrogenase activity increases linearly from 25 to at least 66 degrees Celsius. An incubation of 30 minutes at 70 degrees Celsius drastically reduces the enzyme activity to 11% of the initial value, and 77% of the activity remains after 30 minutes of incubation at 42 degrees Celsius.</text>
    </temperatureDependence>
</comment>
<comment type="subunit">
    <text evidence="3">Heterotrimer composed of an alpha (CdhA), a beta (CdhB) and a gamma (CdhC) subunit.</text>
</comment>
<name>CDHB_PSEU3</name>
<evidence type="ECO:0000250" key="1"/>
<evidence type="ECO:0000255" key="2">
    <source>
        <dbReference type="PROSITE-ProRule" id="PRU00718"/>
    </source>
</evidence>
<evidence type="ECO:0000269" key="3">
    <source>
    </source>
</evidence>
<evidence type="ECO:0000303" key="4">
    <source>
    </source>
</evidence>
<evidence type="ECO:0000305" key="5">
    <source>
    </source>
</evidence>
<gene>
    <name evidence="4" type="primary">cdhB</name>
</gene>
<protein>
    <recommendedName>
        <fullName>Caffeine dehydrogenase subunit beta</fullName>
        <ecNumber evidence="3">1.17.5.2</ecNumber>
    </recommendedName>
    <alternativeName>
        <fullName>Caffeine dehydrogenase medium subunit</fullName>
    </alternativeName>
</protein>
<reference key="1">
    <citation type="journal article" date="2008" name="J. Bacteriol.">
        <title>A novel caffeine dehydrogenase in Pseudomonas sp. strain CBB1 oxidizes caffeine to trimethyluric acid.</title>
        <authorList>
            <person name="Yu C.L."/>
            <person name="Kale Y."/>
            <person name="Gopishetty S."/>
            <person name="Louie T.M."/>
            <person name="Subramanian M."/>
        </authorList>
    </citation>
    <scope>NUCLEOTIDE SEQUENCE [GENOMIC DNA]</scope>
    <scope>FUNCTION</scope>
    <scope>CATALYTIC ACTIVITY</scope>
    <scope>BIOPHYSICOCHEMICAL PROPERTIES</scope>
    <scope>SUBSTRATE SPECIFICITY</scope>
    <scope>SUBUNIT</scope>
    <source>
        <strain>CBB1</strain>
    </source>
</reference>
<organism>
    <name type="scientific">Pseudomonas sp. (strain CBB1)</name>
    <dbReference type="NCBI Taxonomy" id="765715"/>
    <lineage>
        <taxon>Bacteria</taxon>
        <taxon>Pseudomonadati</taxon>
        <taxon>Pseudomonadota</taxon>
        <taxon>Gammaproteobacteria</taxon>
        <taxon>Pseudomonadales</taxon>
        <taxon>Pseudomonadaceae</taxon>
        <taxon>Pseudomonas</taxon>
    </lineage>
</organism>
<keyword id="KW-0274">FAD</keyword>
<keyword id="KW-0285">Flavoprotein</keyword>
<keyword id="KW-0560">Oxidoreductase</keyword>
<feature type="chain" id="PRO_0000418588" description="Caffeine dehydrogenase subunit beta">
    <location>
        <begin position="1"/>
        <end position="295"/>
    </location>
</feature>
<feature type="domain" description="FAD-binding PCMH-type" evidence="2">
    <location>
        <begin position="1"/>
        <end position="178"/>
    </location>
</feature>
<feature type="binding site" evidence="1">
    <location>
        <begin position="32"/>
        <end position="36"/>
    </location>
    <ligand>
        <name>FAD</name>
        <dbReference type="ChEBI" id="CHEBI:57692"/>
    </ligand>
</feature>
<feature type="binding site" evidence="1">
    <location>
        <begin position="111"/>
        <end position="115"/>
    </location>
    <ligand>
        <name>FAD</name>
        <dbReference type="ChEBI" id="CHEBI:57692"/>
    </ligand>
</feature>
<proteinExistence type="evidence at protein level"/>
<accession>D7REY4</accession>
<dbReference type="EC" id="1.17.5.2" evidence="3"/>
<dbReference type="EMBL" id="HM053473">
    <property type="protein sequence ID" value="ADH15880.1"/>
    <property type="molecule type" value="Genomic_DNA"/>
</dbReference>
<dbReference type="SMR" id="D7REY4"/>
<dbReference type="KEGG" id="ag:ADH15880"/>
<dbReference type="GO" id="GO:0034875">
    <property type="term" value="F:caffeine oxidase activity"/>
    <property type="evidence" value="ECO:0007669"/>
    <property type="project" value="UniProtKB-EC"/>
</dbReference>
<dbReference type="GO" id="GO:0071949">
    <property type="term" value="F:FAD binding"/>
    <property type="evidence" value="ECO:0007669"/>
    <property type="project" value="InterPro"/>
</dbReference>
<dbReference type="GO" id="GO:0016491">
    <property type="term" value="F:oxidoreductase activity"/>
    <property type="evidence" value="ECO:0000314"/>
    <property type="project" value="UniProtKB"/>
</dbReference>
<dbReference type="FunFam" id="3.30.390.50:FF:000004">
    <property type="entry name" value="Xanthine dehydrogenase, FAD binding subunit"/>
    <property type="match status" value="1"/>
</dbReference>
<dbReference type="FunFam" id="3.30.465.10:FF:000017">
    <property type="entry name" value="Xanthine dehydrogenase, FAD binding subunit"/>
    <property type="match status" value="1"/>
</dbReference>
<dbReference type="Gene3D" id="3.30.465.10">
    <property type="match status" value="1"/>
</dbReference>
<dbReference type="Gene3D" id="3.30.390.50">
    <property type="entry name" value="CO dehydrogenase flavoprotein, C-terminal domain"/>
    <property type="match status" value="1"/>
</dbReference>
<dbReference type="Gene3D" id="3.30.43.10">
    <property type="entry name" value="Uridine Diphospho-n-acetylenolpyruvylglucosamine Reductase, domain 2"/>
    <property type="match status" value="1"/>
</dbReference>
<dbReference type="InterPro" id="IPR005107">
    <property type="entry name" value="CO_DH_flav_C"/>
</dbReference>
<dbReference type="InterPro" id="IPR036683">
    <property type="entry name" value="CO_DH_flav_C_dom_sf"/>
</dbReference>
<dbReference type="InterPro" id="IPR051312">
    <property type="entry name" value="Diverse_Substr_Oxidored"/>
</dbReference>
<dbReference type="InterPro" id="IPR016166">
    <property type="entry name" value="FAD-bd_PCMH"/>
</dbReference>
<dbReference type="InterPro" id="IPR036318">
    <property type="entry name" value="FAD-bd_PCMH-like_sf"/>
</dbReference>
<dbReference type="InterPro" id="IPR016167">
    <property type="entry name" value="FAD-bd_PCMH_sub1"/>
</dbReference>
<dbReference type="InterPro" id="IPR016169">
    <property type="entry name" value="FAD-bd_PCMH_sub2"/>
</dbReference>
<dbReference type="InterPro" id="IPR002346">
    <property type="entry name" value="Mopterin_DH_FAD-bd"/>
</dbReference>
<dbReference type="PANTHER" id="PTHR42659">
    <property type="entry name" value="XANTHINE DEHYDROGENASE SUBUNIT C-RELATED"/>
    <property type="match status" value="1"/>
</dbReference>
<dbReference type="PANTHER" id="PTHR42659:SF2">
    <property type="entry name" value="XANTHINE DEHYDROGENASE SUBUNIT C-RELATED"/>
    <property type="match status" value="1"/>
</dbReference>
<dbReference type="Pfam" id="PF03450">
    <property type="entry name" value="CO_deh_flav_C"/>
    <property type="match status" value="1"/>
</dbReference>
<dbReference type="Pfam" id="PF00941">
    <property type="entry name" value="FAD_binding_5"/>
    <property type="match status" value="1"/>
</dbReference>
<dbReference type="SMART" id="SM01092">
    <property type="entry name" value="CO_deh_flav_C"/>
    <property type="match status" value="1"/>
</dbReference>
<dbReference type="SUPFAM" id="SSF55447">
    <property type="entry name" value="CO dehydrogenase flavoprotein C-terminal domain-like"/>
    <property type="match status" value="1"/>
</dbReference>
<dbReference type="SUPFAM" id="SSF56176">
    <property type="entry name" value="FAD-binding/transporter-associated domain-like"/>
    <property type="match status" value="1"/>
</dbReference>
<dbReference type="PROSITE" id="PS51387">
    <property type="entry name" value="FAD_PCMH"/>
    <property type="match status" value="1"/>
</dbReference>
<sequence>MKPTAFDYIRPTSLPEALAILAEHSDDVAILAGGQSLMPLLNFRMSRPALVLDINDISELQQVRCENDTLYVGSMVRHCRVEQEEIFRSTIPLMSEAMTSVAHIQIKTRGTLGGNLCNAHPASEMPAVITALGASMVCKSEKRGERVLTPEEFFEGALQNGLQSDELLCEIRIPVPSQYVGWAFEEVARRHGDFAQCGAAVLIGAEDRKIDYARIALCSIGETPIRFHALEQWLIGRPVGNDLPADVKLHCREILDVAEDSTMTAENRAKLASAVTSRAIARAADRIVHLDVKRG</sequence>